<organism>
    <name type="scientific">Mus musculus</name>
    <name type="common">Mouse</name>
    <dbReference type="NCBI Taxonomy" id="10090"/>
    <lineage>
        <taxon>Eukaryota</taxon>
        <taxon>Metazoa</taxon>
        <taxon>Chordata</taxon>
        <taxon>Craniata</taxon>
        <taxon>Vertebrata</taxon>
        <taxon>Euteleostomi</taxon>
        <taxon>Mammalia</taxon>
        <taxon>Eutheria</taxon>
        <taxon>Euarchontoglires</taxon>
        <taxon>Glires</taxon>
        <taxon>Rodentia</taxon>
        <taxon>Myomorpha</taxon>
        <taxon>Muroidea</taxon>
        <taxon>Muridae</taxon>
        <taxon>Murinae</taxon>
        <taxon>Mus</taxon>
        <taxon>Mus</taxon>
    </lineage>
</organism>
<sequence>MDPSALDMAIQHALAGLYPPFEATAPTVLGQVFRLLDSDFRGDGLSFLLDFLIPAKRLCEQVREAACALYTHCLFLHEGWPLCLRDEVVVHLAPLNPLLLRQGDFYLQVESWEEQSVHMTLKCLSSDLREVDKKPIPESSYSLIFTPEWLEAINNDFEGRPLHNCLVASENGITPVPWTKITSPEFVDDRPPIVKVPSSDGDSCPLEDLHLSRPQEPYQAGDLGGKGSVAQIWDKGKGKLSGDKYPGLIKVEPARSGQLAFRTDSEASQSLEGDYVALLGFPQEYRGASPDSEVVTLSVDIQKSQETRPRTKGAPLLGKTLPLSGPAGAPPLGRWACERPAGSGEKPCSGGSRRKARHKASGHTAVRQPQQPHTSVPEKLPDCTSGLVEDTEEEPAASEMQKPVGMPEAMVRLRPGPRQAFSPLLSSAGPGSPAAETKTEETTLGHGRASKPEDCLNKNASFHGSPAPGLQFSFLKEQRVPHVTPEKALLQHARPRKALCPLYSLQPCEAKAPGKDGTTLPTTSGSGPLSGEPPGFRRDSAGPPGGGLRLEECSRTKPRIETLGVKLLQSGIACLPGGRDKVGRPLLLVSTAEDAWEAPWCTTSEVAELLSYLCSVPRLEDKAKGLLVVIDARKGTQRPGLVSALQGIQALAPASVSKVLLLGEKASIPQLSVLPAQVEVLTSLKALRNHVDPSQLPEALEGPFPYHHSEWVQFFQKLDPFLTDLRQASSLLQASIQEFEKGEPPGGVQEATRCLSKSKELMETVLRDPGLLALQREGGTTLASLQQEASGLNANPDVRSHLTEAAALYNLVDGQLHDLVTASNQLLRRLELRVRLGHLETAIHQVSDWMAGEGSQSLQALAPVHVCAETVEKVHAEFEDFFLQVAAQYRQGLDLSKQAAQLGAAEEGAGEMGLPDLAAFASTQQAFQARLTHFYMAAERQRTDLETLLHLHRFRRKMSRFHMDCQNLLTQLSLGKAVKASPGDQLHLRLHCYLKRLASEFQTEKLLAMKLQVASLSRPGLGQEVWEEAQERHQEIQSLLRKALAYCPCPEVPATQVALIDRSRPVAKGQGLPREVGSKWDRSLQDSLAVDHVFKSQRTPQGEQSRNMWAGLLSPEPGQSGDTEEVRGTPKLPDPTLERLLASLFSWPHLPKQSKASRPTGGSFSSEGTGSQTSLEDSPHTSPPASL</sequence>
<reference key="1">
    <citation type="journal article" date="2005" name="Science">
        <title>The transcriptional landscape of the mammalian genome.</title>
        <authorList>
            <person name="Carninci P."/>
            <person name="Kasukawa T."/>
            <person name="Katayama S."/>
            <person name="Gough J."/>
            <person name="Frith M.C."/>
            <person name="Maeda N."/>
            <person name="Oyama R."/>
            <person name="Ravasi T."/>
            <person name="Lenhard B."/>
            <person name="Wells C."/>
            <person name="Kodzius R."/>
            <person name="Shimokawa K."/>
            <person name="Bajic V.B."/>
            <person name="Brenner S.E."/>
            <person name="Batalov S."/>
            <person name="Forrest A.R."/>
            <person name="Zavolan M."/>
            <person name="Davis M.J."/>
            <person name="Wilming L.G."/>
            <person name="Aidinis V."/>
            <person name="Allen J.E."/>
            <person name="Ambesi-Impiombato A."/>
            <person name="Apweiler R."/>
            <person name="Aturaliya R.N."/>
            <person name="Bailey T.L."/>
            <person name="Bansal M."/>
            <person name="Baxter L."/>
            <person name="Beisel K.W."/>
            <person name="Bersano T."/>
            <person name="Bono H."/>
            <person name="Chalk A.M."/>
            <person name="Chiu K.P."/>
            <person name="Choudhary V."/>
            <person name="Christoffels A."/>
            <person name="Clutterbuck D.R."/>
            <person name="Crowe M.L."/>
            <person name="Dalla E."/>
            <person name="Dalrymple B.P."/>
            <person name="de Bono B."/>
            <person name="Della Gatta G."/>
            <person name="di Bernardo D."/>
            <person name="Down T."/>
            <person name="Engstrom P."/>
            <person name="Fagiolini M."/>
            <person name="Faulkner G."/>
            <person name="Fletcher C.F."/>
            <person name="Fukushima T."/>
            <person name="Furuno M."/>
            <person name="Futaki S."/>
            <person name="Gariboldi M."/>
            <person name="Georgii-Hemming P."/>
            <person name="Gingeras T.R."/>
            <person name="Gojobori T."/>
            <person name="Green R.E."/>
            <person name="Gustincich S."/>
            <person name="Harbers M."/>
            <person name="Hayashi Y."/>
            <person name="Hensch T.K."/>
            <person name="Hirokawa N."/>
            <person name="Hill D."/>
            <person name="Huminiecki L."/>
            <person name="Iacono M."/>
            <person name="Ikeo K."/>
            <person name="Iwama A."/>
            <person name="Ishikawa T."/>
            <person name="Jakt M."/>
            <person name="Kanapin A."/>
            <person name="Katoh M."/>
            <person name="Kawasawa Y."/>
            <person name="Kelso J."/>
            <person name="Kitamura H."/>
            <person name="Kitano H."/>
            <person name="Kollias G."/>
            <person name="Krishnan S.P."/>
            <person name="Kruger A."/>
            <person name="Kummerfeld S.K."/>
            <person name="Kurochkin I.V."/>
            <person name="Lareau L.F."/>
            <person name="Lazarevic D."/>
            <person name="Lipovich L."/>
            <person name="Liu J."/>
            <person name="Liuni S."/>
            <person name="McWilliam S."/>
            <person name="Madan Babu M."/>
            <person name="Madera M."/>
            <person name="Marchionni L."/>
            <person name="Matsuda H."/>
            <person name="Matsuzawa S."/>
            <person name="Miki H."/>
            <person name="Mignone F."/>
            <person name="Miyake S."/>
            <person name="Morris K."/>
            <person name="Mottagui-Tabar S."/>
            <person name="Mulder N."/>
            <person name="Nakano N."/>
            <person name="Nakauchi H."/>
            <person name="Ng P."/>
            <person name="Nilsson R."/>
            <person name="Nishiguchi S."/>
            <person name="Nishikawa S."/>
            <person name="Nori F."/>
            <person name="Ohara O."/>
            <person name="Okazaki Y."/>
            <person name="Orlando V."/>
            <person name="Pang K.C."/>
            <person name="Pavan W.J."/>
            <person name="Pavesi G."/>
            <person name="Pesole G."/>
            <person name="Petrovsky N."/>
            <person name="Piazza S."/>
            <person name="Reed J."/>
            <person name="Reid J.F."/>
            <person name="Ring B.Z."/>
            <person name="Ringwald M."/>
            <person name="Rost B."/>
            <person name="Ruan Y."/>
            <person name="Salzberg S.L."/>
            <person name="Sandelin A."/>
            <person name="Schneider C."/>
            <person name="Schoenbach C."/>
            <person name="Sekiguchi K."/>
            <person name="Semple C.A."/>
            <person name="Seno S."/>
            <person name="Sessa L."/>
            <person name="Sheng Y."/>
            <person name="Shibata Y."/>
            <person name="Shimada H."/>
            <person name="Shimada K."/>
            <person name="Silva D."/>
            <person name="Sinclair B."/>
            <person name="Sperling S."/>
            <person name="Stupka E."/>
            <person name="Sugiura K."/>
            <person name="Sultana R."/>
            <person name="Takenaka Y."/>
            <person name="Taki K."/>
            <person name="Tammoja K."/>
            <person name="Tan S.L."/>
            <person name="Tang S."/>
            <person name="Taylor M.S."/>
            <person name="Tegner J."/>
            <person name="Teichmann S.A."/>
            <person name="Ueda H.R."/>
            <person name="van Nimwegen E."/>
            <person name="Verardo R."/>
            <person name="Wei C.L."/>
            <person name="Yagi K."/>
            <person name="Yamanishi H."/>
            <person name="Zabarovsky E."/>
            <person name="Zhu S."/>
            <person name="Zimmer A."/>
            <person name="Hide W."/>
            <person name="Bult C."/>
            <person name="Grimmond S.M."/>
            <person name="Teasdale R.D."/>
            <person name="Liu E.T."/>
            <person name="Brusic V."/>
            <person name="Quackenbush J."/>
            <person name="Wahlestedt C."/>
            <person name="Mattick J.S."/>
            <person name="Hume D.A."/>
            <person name="Kai C."/>
            <person name="Sasaki D."/>
            <person name="Tomaru Y."/>
            <person name="Fukuda S."/>
            <person name="Kanamori-Katayama M."/>
            <person name="Suzuki M."/>
            <person name="Aoki J."/>
            <person name="Arakawa T."/>
            <person name="Iida J."/>
            <person name="Imamura K."/>
            <person name="Itoh M."/>
            <person name="Kato T."/>
            <person name="Kawaji H."/>
            <person name="Kawagashira N."/>
            <person name="Kawashima T."/>
            <person name="Kojima M."/>
            <person name="Kondo S."/>
            <person name="Konno H."/>
            <person name="Nakano K."/>
            <person name="Ninomiya N."/>
            <person name="Nishio T."/>
            <person name="Okada M."/>
            <person name="Plessy C."/>
            <person name="Shibata K."/>
            <person name="Shiraki T."/>
            <person name="Suzuki S."/>
            <person name="Tagami M."/>
            <person name="Waki K."/>
            <person name="Watahiki A."/>
            <person name="Okamura-Oho Y."/>
            <person name="Suzuki H."/>
            <person name="Kawai J."/>
            <person name="Hayashizaki Y."/>
        </authorList>
    </citation>
    <scope>NUCLEOTIDE SEQUENCE</scope>
    <source>
        <strain>C57BL/6J</strain>
        <tissue>Kidney</tissue>
    </source>
</reference>
<reference key="2">
    <citation type="journal article" date="2009" name="PLoS Biol.">
        <title>Lineage-specific biology revealed by a finished genome assembly of the mouse.</title>
        <authorList>
            <person name="Church D.M."/>
            <person name="Goodstadt L."/>
            <person name="Hillier L.W."/>
            <person name="Zody M.C."/>
            <person name="Goldstein S."/>
            <person name="She X."/>
            <person name="Bult C.J."/>
            <person name="Agarwala R."/>
            <person name="Cherry J.L."/>
            <person name="DiCuccio M."/>
            <person name="Hlavina W."/>
            <person name="Kapustin Y."/>
            <person name="Meric P."/>
            <person name="Maglott D."/>
            <person name="Birtle Z."/>
            <person name="Marques A.C."/>
            <person name="Graves T."/>
            <person name="Zhou S."/>
            <person name="Teague B."/>
            <person name="Potamousis K."/>
            <person name="Churas C."/>
            <person name="Place M."/>
            <person name="Herschleb J."/>
            <person name="Runnheim R."/>
            <person name="Forrest D."/>
            <person name="Amos-Landgraf J."/>
            <person name="Schwartz D.C."/>
            <person name="Cheng Z."/>
            <person name="Lindblad-Toh K."/>
            <person name="Eichler E.E."/>
            <person name="Ponting C.P."/>
        </authorList>
    </citation>
    <scope>NUCLEOTIDE SEQUENCE [LARGE SCALE GENOMIC DNA]</scope>
    <source>
        <strain>C57BL/6J</strain>
    </source>
</reference>
<reference key="3">
    <citation type="journal article" date="2004" name="Genome Res.">
        <title>The status, quality, and expansion of the NIH full-length cDNA project: the Mammalian Gene Collection (MGC).</title>
        <authorList>
            <consortium name="The MGC Project Team"/>
        </authorList>
    </citation>
    <scope>NUCLEOTIDE SEQUENCE [LARGE SCALE MRNA]</scope>
    <source>
        <tissue>Brain</tissue>
    </source>
</reference>
<dbReference type="EMBL" id="AK052605">
    <property type="protein sequence ID" value="BAC35060.1"/>
    <property type="molecule type" value="mRNA"/>
</dbReference>
<dbReference type="EMBL" id="AL663063">
    <property type="status" value="NOT_ANNOTATED_CDS"/>
    <property type="molecule type" value="Genomic_DNA"/>
</dbReference>
<dbReference type="EMBL" id="BC137959">
    <property type="protein sequence ID" value="AAI37960.1"/>
    <property type="molecule type" value="mRNA"/>
</dbReference>
<dbReference type="EMBL" id="BC137960">
    <property type="protein sequence ID" value="AAI37961.1"/>
    <property type="molecule type" value="mRNA"/>
</dbReference>
<dbReference type="CCDS" id="CCDS16986.1"/>
<dbReference type="RefSeq" id="NP_001124493.1">
    <property type="nucleotide sequence ID" value="NM_001131021.2"/>
</dbReference>
<dbReference type="RefSeq" id="NP_808325.2">
    <property type="nucleotide sequence ID" value="NM_177657.5"/>
</dbReference>
<dbReference type="SMR" id="Q8BWG4"/>
<dbReference type="BioGRID" id="230782">
    <property type="interactions" value="1"/>
</dbReference>
<dbReference type="STRING" id="10090.ENSMUSP00000040546"/>
<dbReference type="iPTMnet" id="Q8BWG4"/>
<dbReference type="PhosphoSitePlus" id="Q8BWG4"/>
<dbReference type="PaxDb" id="10090-ENSMUSP00000040546"/>
<dbReference type="Antibodypedia" id="55264">
    <property type="antibodies" value="6 antibodies from 6 providers"/>
</dbReference>
<dbReference type="DNASU" id="228846"/>
<dbReference type="Ensembl" id="ENSMUST00000046944.6">
    <property type="protein sequence ID" value="ENSMUSP00000040546.6"/>
    <property type="gene ID" value="ENSMUSG00000037813.14"/>
</dbReference>
<dbReference type="GeneID" id="228846"/>
<dbReference type="KEGG" id="mmu:228846"/>
<dbReference type="UCSC" id="uc008npv.3">
    <property type="organism name" value="mouse"/>
</dbReference>
<dbReference type="AGR" id="MGI:3606579"/>
<dbReference type="MGI" id="MGI:3606579">
    <property type="gene designation" value="D630003M21Rik"/>
</dbReference>
<dbReference type="VEuPathDB" id="HostDB:ENSMUSG00000037813"/>
<dbReference type="eggNOG" id="KOG4240">
    <property type="taxonomic scope" value="Eukaryota"/>
</dbReference>
<dbReference type="GeneTree" id="ENSGT00940000161174"/>
<dbReference type="InParanoid" id="Q8BWG4"/>
<dbReference type="OMA" id="EMGTEDW"/>
<dbReference type="OrthoDB" id="6152532at2759"/>
<dbReference type="PhylomeDB" id="Q8BWG4"/>
<dbReference type="TreeFam" id="TF334329"/>
<dbReference type="BioGRID-ORCS" id="228846">
    <property type="hits" value="5 hits in 76 CRISPR screens"/>
</dbReference>
<dbReference type="PRO" id="PR:Q8BWG4"/>
<dbReference type="Proteomes" id="UP000000589">
    <property type="component" value="Chromosome 2"/>
</dbReference>
<dbReference type="RNAct" id="Q8BWG4">
    <property type="molecule type" value="protein"/>
</dbReference>
<dbReference type="Bgee" id="ENSMUSG00000037813">
    <property type="expression patterns" value="Expressed in adrenal gland and 50 other cell types or tissues"/>
</dbReference>
<dbReference type="ExpressionAtlas" id="Q8BWG4">
    <property type="expression patterns" value="baseline and differential"/>
</dbReference>
<dbReference type="Gene3D" id="1.20.58.60">
    <property type="match status" value="1"/>
</dbReference>
<dbReference type="InterPro" id="IPR052231">
    <property type="entry name" value="Rho_GEF_signaling-related"/>
</dbReference>
<dbReference type="PANTHER" id="PTHR45845">
    <property type="entry name" value="RHO GUANINE NUCLEOTIDE EXCHANGE FACTOR-RELATED"/>
    <property type="match status" value="1"/>
</dbReference>
<dbReference type="PANTHER" id="PTHR45845:SF2">
    <property type="entry name" value="RIKEN CDNA D630003M21 GENE"/>
    <property type="match status" value="1"/>
</dbReference>
<keyword id="KW-1185">Reference proteome</keyword>
<feature type="chain" id="PRO_0000317285" description="Uncharacterized protein KIAA1755 homolog">
    <location>
        <begin position="1"/>
        <end position="1187"/>
    </location>
</feature>
<feature type="region of interest" description="Disordered" evidence="1">
    <location>
        <begin position="302"/>
        <end position="405"/>
    </location>
</feature>
<feature type="region of interest" description="Disordered" evidence="1">
    <location>
        <begin position="419"/>
        <end position="451"/>
    </location>
</feature>
<feature type="region of interest" description="Disordered" evidence="1">
    <location>
        <begin position="511"/>
        <end position="551"/>
    </location>
</feature>
<feature type="region of interest" description="Disordered" evidence="1">
    <location>
        <begin position="1095"/>
        <end position="1134"/>
    </location>
</feature>
<feature type="region of interest" description="Disordered" evidence="1">
    <location>
        <begin position="1148"/>
        <end position="1187"/>
    </location>
</feature>
<feature type="compositionally biased region" description="Low complexity" evidence="1">
    <location>
        <begin position="321"/>
        <end position="333"/>
    </location>
</feature>
<feature type="compositionally biased region" description="Basic residues" evidence="1">
    <location>
        <begin position="352"/>
        <end position="361"/>
    </location>
</feature>
<feature type="compositionally biased region" description="Low complexity" evidence="1">
    <location>
        <begin position="422"/>
        <end position="435"/>
    </location>
</feature>
<feature type="compositionally biased region" description="Low complexity" evidence="1">
    <location>
        <begin position="517"/>
        <end position="534"/>
    </location>
</feature>
<feature type="compositionally biased region" description="Polar residues" evidence="1">
    <location>
        <begin position="1096"/>
        <end position="1107"/>
    </location>
</feature>
<feature type="compositionally biased region" description="Low complexity" evidence="1">
    <location>
        <begin position="1160"/>
        <end position="1174"/>
    </location>
</feature>
<feature type="sequence conflict" description="In Ref. 1; BAC35060." evidence="2" ref="1">
    <original>A</original>
    <variation>G</variation>
    <location>
        <position position="1067"/>
    </location>
</feature>
<accession>Q8BWG4</accession>
<accession>A2AC61</accession>
<accession>B2RQJ6</accession>
<protein>
    <recommendedName>
        <fullName>Uncharacterized protein KIAA1755 homolog</fullName>
    </recommendedName>
</protein>
<evidence type="ECO:0000256" key="1">
    <source>
        <dbReference type="SAM" id="MobiDB-lite"/>
    </source>
</evidence>
<evidence type="ECO:0000305" key="2"/>
<proteinExistence type="evidence at transcript level"/>
<name>K1755_MOUSE</name>